<evidence type="ECO:0000250" key="1"/>
<evidence type="ECO:0000250" key="2">
    <source>
        <dbReference type="UniProtKB" id="P68425"/>
    </source>
</evidence>
<evidence type="ECO:0000255" key="3"/>
<evidence type="ECO:0000255" key="4">
    <source>
        <dbReference type="PROSITE-ProRule" id="PRU00031"/>
    </source>
</evidence>
<evidence type="ECO:0000305" key="5"/>
<evidence type="ECO:0000305" key="6">
    <source>
    </source>
</evidence>
<protein>
    <recommendedName>
        <fullName>Kunitz-type U15-theraphotoxin-Hhn1m</fullName>
        <shortName>U15-TRTX-Hhn1m</shortName>
    </recommendedName>
    <alternativeName>
        <fullName>Kunitz-type serine protease inhibitor hainantoxin-XI-13</fullName>
        <shortName>HNTX-XI-13</shortName>
    </alternativeName>
</protein>
<feature type="signal peptide" evidence="3">
    <location>
        <begin position="1"/>
        <end position="27"/>
    </location>
</feature>
<feature type="propeptide" id="PRO_0000401002" evidence="1">
    <location>
        <begin position="28"/>
        <end position="33"/>
    </location>
</feature>
<feature type="peptide" id="PRO_0000401003" description="Kunitz-type U15-theraphotoxin-Hhn1m">
    <location>
        <begin position="34"/>
        <end position="88"/>
    </location>
</feature>
<feature type="domain" description="BPTI/Kunitz inhibitor" evidence="4">
    <location>
        <begin position="37"/>
        <end position="85"/>
    </location>
</feature>
<feature type="site" description="Reactive bond for trypsin" evidence="1">
    <location>
        <begin position="47"/>
        <end position="48"/>
    </location>
</feature>
<feature type="disulfide bond" evidence="4">
    <location>
        <begin position="37"/>
        <end position="85"/>
    </location>
</feature>
<feature type="disulfide bond" evidence="4">
    <location>
        <begin position="60"/>
        <end position="81"/>
    </location>
</feature>
<proteinExistence type="inferred from homology"/>
<accession>D2Y2Q2</accession>
<dbReference type="EMBL" id="GU293129">
    <property type="protein sequence ID" value="ADB56945.1"/>
    <property type="molecule type" value="Genomic_DNA"/>
</dbReference>
<dbReference type="SMR" id="D2Y2Q2"/>
<dbReference type="ArachnoServer" id="AS002063">
    <property type="toxin name" value="U15-theraphotoxin-Hhn1m"/>
</dbReference>
<dbReference type="GO" id="GO:0005576">
    <property type="term" value="C:extracellular region"/>
    <property type="evidence" value="ECO:0007669"/>
    <property type="project" value="UniProtKB-SubCell"/>
</dbReference>
<dbReference type="GO" id="GO:0015459">
    <property type="term" value="F:potassium channel regulator activity"/>
    <property type="evidence" value="ECO:0007669"/>
    <property type="project" value="UniProtKB-KW"/>
</dbReference>
<dbReference type="GO" id="GO:0004867">
    <property type="term" value="F:serine-type endopeptidase inhibitor activity"/>
    <property type="evidence" value="ECO:0007669"/>
    <property type="project" value="UniProtKB-KW"/>
</dbReference>
<dbReference type="GO" id="GO:0090729">
    <property type="term" value="F:toxin activity"/>
    <property type="evidence" value="ECO:0007669"/>
    <property type="project" value="UniProtKB-KW"/>
</dbReference>
<dbReference type="GO" id="GO:0044562">
    <property type="term" value="P:envenomation resulting in negative regulation of voltage-gated potassium channel activity in another organism"/>
    <property type="evidence" value="ECO:0007669"/>
    <property type="project" value="UniProtKB-ARBA"/>
</dbReference>
<dbReference type="CDD" id="cd22598">
    <property type="entry name" value="Kunitz_huwentoxin"/>
    <property type="match status" value="1"/>
</dbReference>
<dbReference type="FunFam" id="4.10.410.10:FF:000020">
    <property type="entry name" value="Collagen, type VI, alpha 3"/>
    <property type="match status" value="1"/>
</dbReference>
<dbReference type="Gene3D" id="4.10.410.10">
    <property type="entry name" value="Pancreatic trypsin inhibitor Kunitz domain"/>
    <property type="match status" value="1"/>
</dbReference>
<dbReference type="InterPro" id="IPR002223">
    <property type="entry name" value="Kunitz_BPTI"/>
</dbReference>
<dbReference type="InterPro" id="IPR036880">
    <property type="entry name" value="Kunitz_BPTI_sf"/>
</dbReference>
<dbReference type="PANTHER" id="PTHR47247">
    <property type="entry name" value="KUNITZ-TYPE PROTEASE INHIBITOR 2"/>
    <property type="match status" value="1"/>
</dbReference>
<dbReference type="PANTHER" id="PTHR47247:SF1">
    <property type="entry name" value="KUNITZ-TYPE PROTEASE INHIBITOR 2"/>
    <property type="match status" value="1"/>
</dbReference>
<dbReference type="Pfam" id="PF00014">
    <property type="entry name" value="Kunitz_BPTI"/>
    <property type="match status" value="1"/>
</dbReference>
<dbReference type="PRINTS" id="PR00759">
    <property type="entry name" value="BASICPTASE"/>
</dbReference>
<dbReference type="SMART" id="SM00131">
    <property type="entry name" value="KU"/>
    <property type="match status" value="1"/>
</dbReference>
<dbReference type="SUPFAM" id="SSF57362">
    <property type="entry name" value="BPTI-like"/>
    <property type="match status" value="1"/>
</dbReference>
<dbReference type="PROSITE" id="PS50279">
    <property type="entry name" value="BPTI_KUNITZ_2"/>
    <property type="match status" value="1"/>
</dbReference>
<keyword id="KW-1015">Disulfide bond</keyword>
<keyword id="KW-0646">Protease inhibitor</keyword>
<keyword id="KW-0964">Secreted</keyword>
<keyword id="KW-0722">Serine protease inhibitor</keyword>
<keyword id="KW-0732">Signal</keyword>
<sequence>MGIARILSAVLFLSVLFVVTFPTLLSADHHDGRIDTCRLPSDRGRCKASFERWYFNGTTCAKFVYGGYGGNDNRFPTEKACMKRCAKA</sequence>
<reference key="1">
    <citation type="journal article" date="2010" name="J. Proteome Res.">
        <title>Molecular diversification of peptide toxins from the tarantula Haplopelma hainanum (Ornithoctonus hainana) venom based on transcriptomic, peptidomic, and genomic analyses.</title>
        <authorList>
            <person name="Tang X."/>
            <person name="Zhang Y."/>
            <person name="Hu W."/>
            <person name="Xu D."/>
            <person name="Tao H."/>
            <person name="Yang X."/>
            <person name="Li Y."/>
            <person name="Jiang L."/>
            <person name="Liang S."/>
        </authorList>
    </citation>
    <scope>NUCLEOTIDE SEQUENCE [LARGE SCALE GENOMIC DNA]</scope>
    <source>
        <tissue>Venom gland</tissue>
    </source>
</reference>
<organism>
    <name type="scientific">Cyriopagopus hainanus</name>
    <name type="common">Chinese bird spider</name>
    <name type="synonym">Haplopelma hainanum</name>
    <dbReference type="NCBI Taxonomy" id="209901"/>
    <lineage>
        <taxon>Eukaryota</taxon>
        <taxon>Metazoa</taxon>
        <taxon>Ecdysozoa</taxon>
        <taxon>Arthropoda</taxon>
        <taxon>Chelicerata</taxon>
        <taxon>Arachnida</taxon>
        <taxon>Araneae</taxon>
        <taxon>Mygalomorphae</taxon>
        <taxon>Theraphosidae</taxon>
        <taxon>Haplopelma</taxon>
    </lineage>
</organism>
<name>VKTM1_CYRHA</name>
<comment type="function">
    <text evidence="2">Serine protease inhibitor that inhibits trypsin at a molar ratio of 1:1.</text>
</comment>
<comment type="subcellular location">
    <subcellularLocation>
        <location evidence="6">Secreted</location>
    </subcellularLocation>
</comment>
<comment type="tissue specificity">
    <text evidence="6">Expressed by the venom gland.</text>
</comment>
<comment type="similarity">
    <text evidence="5">Belongs to the venom Kunitz-type family. 01 (intermediate) subfamily.</text>
</comment>